<feature type="chain" id="PRO_0000066861" description="Potassium channel toxin gamma-KTx 4.3">
    <location>
        <begin position="1"/>
        <end position="43"/>
    </location>
</feature>
<feature type="disulfide bond" evidence="3">
    <location>
        <begin position="5"/>
        <end position="23"/>
    </location>
</feature>
<feature type="disulfide bond" evidence="3">
    <location>
        <begin position="11"/>
        <end position="34"/>
    </location>
</feature>
<feature type="disulfide bond" evidence="3">
    <location>
        <begin position="20"/>
        <end position="39"/>
    </location>
</feature>
<feature type="disulfide bond" evidence="3">
    <location>
        <begin position="24"/>
        <end position="41"/>
    </location>
</feature>
<evidence type="ECO:0000250" key="1"/>
<evidence type="ECO:0000250" key="2">
    <source>
        <dbReference type="UniProtKB" id="P59940"/>
    </source>
</evidence>
<evidence type="ECO:0000250" key="3">
    <source>
        <dbReference type="UniProtKB" id="Q86QT3"/>
    </source>
</evidence>
<evidence type="ECO:0000250" key="4">
    <source>
        <dbReference type="UniProtKB" id="Q86QU9"/>
    </source>
</evidence>
<evidence type="ECO:0000303" key="5">
    <source>
    </source>
</evidence>
<evidence type="ECO:0000305" key="6"/>
<proteinExistence type="inferred from homology"/>
<accession>Q86QU0</accession>
<name>KGX43_CENEX</name>
<keyword id="KW-1015">Disulfide bond</keyword>
<keyword id="KW-0872">Ion channel impairing toxin</keyword>
<keyword id="KW-0960">Knottin</keyword>
<keyword id="KW-0528">Neurotoxin</keyword>
<keyword id="KW-0632">Potassium channel impairing toxin</keyword>
<keyword id="KW-0964">Secreted</keyword>
<keyword id="KW-0800">Toxin</keyword>
<keyword id="KW-1220">Voltage-gated potassium channel impairing toxin</keyword>
<comment type="function">
    <text evidence="2">Reversibly blocks Kv11/ERG potassium channels.</text>
</comment>
<comment type="subcellular location">
    <subcellularLocation>
        <location evidence="4">Secreted</location>
    </subcellularLocation>
</comment>
<comment type="tissue specificity">
    <text evidence="6">Expressed by the venom gland.</text>
</comment>
<comment type="domain">
    <text evidence="1">The presence of a 'disulfide through disulfide knot' structurally defines this protein as a knottin.</text>
</comment>
<comment type="domain">
    <text evidence="3">Has the CSalpha/beta fold, which comprises one or two short alpha helices connected to anti-parallel beta-sheets stabilized by three or four disulfide bonds.</text>
</comment>
<comment type="similarity">
    <text evidence="6">Belongs to the ergtoxin family. Gamma-KTx 4 subfamily.</text>
</comment>
<organism>
    <name type="scientific">Centruroides exilicauda</name>
    <name type="common">Bark scorpion</name>
    <name type="synonym">Buthus exilicauda</name>
    <dbReference type="NCBI Taxonomy" id="6879"/>
    <lineage>
        <taxon>Eukaryota</taxon>
        <taxon>Metazoa</taxon>
        <taxon>Ecdysozoa</taxon>
        <taxon>Arthropoda</taxon>
        <taxon>Chelicerata</taxon>
        <taxon>Arachnida</taxon>
        <taxon>Scorpiones</taxon>
        <taxon>Buthida</taxon>
        <taxon>Buthoidea</taxon>
        <taxon>Buthidae</taxon>
        <taxon>Centruroides</taxon>
    </lineage>
</organism>
<protein>
    <recommendedName>
        <fullName evidence="5">Potassium channel toxin gamma-KTx 4.3</fullName>
    </recommendedName>
    <alternativeName>
        <fullName evidence="6">CexErgTx2</fullName>
        <shortName evidence="5">CexErg2</shortName>
        <shortName evidence="5">ErgTx2</shortName>
    </alternativeName>
    <alternativeName>
        <fullName evidence="5">Ergtoxin-like protein</fullName>
    </alternativeName>
</protein>
<reference key="1">
    <citation type="journal article" date="2002" name="FEBS Lett.">
        <title>A large number of novel Ergtoxin-like genes and ERG K+-channels blocking peptides from scorpions of the genus Centruroides.</title>
        <authorList>
            <person name="Corona M."/>
            <person name="Gurrola G.B."/>
            <person name="Merino E."/>
            <person name="Cassulini R.R."/>
            <person name="Valdez-Cruz N.A."/>
            <person name="Garcia B."/>
            <person name="Ramirez-Dominguez M.E."/>
            <person name="Coronas F.I."/>
            <person name="Zamudio F.Z."/>
            <person name="Wanke E."/>
            <person name="Possani L.D."/>
        </authorList>
    </citation>
    <scope>NUCLEOTIDE SEQUENCE [MRNA]</scope>
    <scope>NOMENCLATURE</scope>
    <source>
        <tissue>Venom gland</tissue>
    </source>
</reference>
<sequence length="43" mass="4855">DRDSCVDKSKCGKYGYYGQCDECCKKAGDRAGICEYYKCKCNP</sequence>
<dbReference type="EMBL" id="AY159353">
    <property type="protein sequence ID" value="AAO22231.1"/>
    <property type="molecule type" value="mRNA"/>
</dbReference>
<dbReference type="SMR" id="Q86QU0"/>
<dbReference type="GO" id="GO:0005576">
    <property type="term" value="C:extracellular region"/>
    <property type="evidence" value="ECO:0007669"/>
    <property type="project" value="UniProtKB-SubCell"/>
</dbReference>
<dbReference type="GO" id="GO:0019870">
    <property type="term" value="F:potassium channel inhibitor activity"/>
    <property type="evidence" value="ECO:0007669"/>
    <property type="project" value="InterPro"/>
</dbReference>
<dbReference type="GO" id="GO:0090729">
    <property type="term" value="F:toxin activity"/>
    <property type="evidence" value="ECO:0007669"/>
    <property type="project" value="UniProtKB-KW"/>
</dbReference>
<dbReference type="Gene3D" id="3.30.30.10">
    <property type="entry name" value="Knottin, scorpion toxin-like"/>
    <property type="match status" value="1"/>
</dbReference>
<dbReference type="InterPro" id="IPR012622">
    <property type="entry name" value="Ergtoxin"/>
</dbReference>
<dbReference type="InterPro" id="IPR036574">
    <property type="entry name" value="Scorpion_toxin-like_sf"/>
</dbReference>
<dbReference type="Pfam" id="PF08086">
    <property type="entry name" value="Toxin_17"/>
    <property type="match status" value="1"/>
</dbReference>
<dbReference type="SUPFAM" id="SSF57095">
    <property type="entry name" value="Scorpion toxin-like"/>
    <property type="match status" value="1"/>
</dbReference>
<dbReference type="PROSITE" id="PS60026">
    <property type="entry name" value="ERGTX"/>
    <property type="match status" value="1"/>
</dbReference>